<name>RL6_AMOA5</name>
<evidence type="ECO:0000255" key="1">
    <source>
        <dbReference type="HAMAP-Rule" id="MF_01365"/>
    </source>
</evidence>
<evidence type="ECO:0000305" key="2"/>
<gene>
    <name evidence="1" type="primary">rplF</name>
    <name type="ordered locus">Aasi_0182</name>
</gene>
<protein>
    <recommendedName>
        <fullName evidence="1">Large ribosomal subunit protein uL6</fullName>
    </recommendedName>
    <alternativeName>
        <fullName evidence="2">50S ribosomal protein L6</fullName>
    </alternativeName>
</protein>
<dbReference type="EMBL" id="CP001102">
    <property type="protein sequence ID" value="ACE05627.1"/>
    <property type="molecule type" value="Genomic_DNA"/>
</dbReference>
<dbReference type="RefSeq" id="WP_012472392.1">
    <property type="nucleotide sequence ID" value="NC_010830.1"/>
</dbReference>
<dbReference type="SMR" id="B3EUK8"/>
<dbReference type="STRING" id="452471.Aasi_0182"/>
<dbReference type="KEGG" id="aas:Aasi_0182"/>
<dbReference type="eggNOG" id="COG0097">
    <property type="taxonomic scope" value="Bacteria"/>
</dbReference>
<dbReference type="HOGENOM" id="CLU_065464_1_2_10"/>
<dbReference type="OrthoDB" id="9805007at2"/>
<dbReference type="Proteomes" id="UP000001227">
    <property type="component" value="Chromosome"/>
</dbReference>
<dbReference type="GO" id="GO:0022625">
    <property type="term" value="C:cytosolic large ribosomal subunit"/>
    <property type="evidence" value="ECO:0007669"/>
    <property type="project" value="TreeGrafter"/>
</dbReference>
<dbReference type="GO" id="GO:0019843">
    <property type="term" value="F:rRNA binding"/>
    <property type="evidence" value="ECO:0007669"/>
    <property type="project" value="UniProtKB-UniRule"/>
</dbReference>
<dbReference type="GO" id="GO:0003735">
    <property type="term" value="F:structural constituent of ribosome"/>
    <property type="evidence" value="ECO:0007669"/>
    <property type="project" value="InterPro"/>
</dbReference>
<dbReference type="GO" id="GO:0002181">
    <property type="term" value="P:cytoplasmic translation"/>
    <property type="evidence" value="ECO:0007669"/>
    <property type="project" value="TreeGrafter"/>
</dbReference>
<dbReference type="FunFam" id="3.90.930.12:FF:000002">
    <property type="entry name" value="50S ribosomal protein L6"/>
    <property type="match status" value="1"/>
</dbReference>
<dbReference type="Gene3D" id="3.90.930.12">
    <property type="entry name" value="Ribosomal protein L6, alpha-beta domain"/>
    <property type="match status" value="2"/>
</dbReference>
<dbReference type="HAMAP" id="MF_01365_B">
    <property type="entry name" value="Ribosomal_uL6_B"/>
    <property type="match status" value="1"/>
</dbReference>
<dbReference type="InterPro" id="IPR000702">
    <property type="entry name" value="Ribosomal_uL6-like"/>
</dbReference>
<dbReference type="InterPro" id="IPR036789">
    <property type="entry name" value="Ribosomal_uL6-like_a/b-dom_sf"/>
</dbReference>
<dbReference type="InterPro" id="IPR020040">
    <property type="entry name" value="Ribosomal_uL6_a/b-dom"/>
</dbReference>
<dbReference type="InterPro" id="IPR019906">
    <property type="entry name" value="Ribosomal_uL6_bac-type"/>
</dbReference>
<dbReference type="NCBIfam" id="TIGR03654">
    <property type="entry name" value="L6_bact"/>
    <property type="match status" value="1"/>
</dbReference>
<dbReference type="PANTHER" id="PTHR11655">
    <property type="entry name" value="60S/50S RIBOSOMAL PROTEIN L6/L9"/>
    <property type="match status" value="1"/>
</dbReference>
<dbReference type="PANTHER" id="PTHR11655:SF14">
    <property type="entry name" value="LARGE RIBOSOMAL SUBUNIT PROTEIN UL6M"/>
    <property type="match status" value="1"/>
</dbReference>
<dbReference type="Pfam" id="PF00347">
    <property type="entry name" value="Ribosomal_L6"/>
    <property type="match status" value="2"/>
</dbReference>
<dbReference type="PIRSF" id="PIRSF002162">
    <property type="entry name" value="Ribosomal_L6"/>
    <property type="match status" value="1"/>
</dbReference>
<dbReference type="PRINTS" id="PR00059">
    <property type="entry name" value="RIBOSOMALL6"/>
</dbReference>
<dbReference type="SUPFAM" id="SSF56053">
    <property type="entry name" value="Ribosomal protein L6"/>
    <property type="match status" value="2"/>
</dbReference>
<keyword id="KW-1185">Reference proteome</keyword>
<keyword id="KW-0687">Ribonucleoprotein</keyword>
<keyword id="KW-0689">Ribosomal protein</keyword>
<keyword id="KW-0694">RNA-binding</keyword>
<keyword id="KW-0699">rRNA-binding</keyword>
<reference key="1">
    <citation type="journal article" date="2010" name="J. Bacteriol.">
        <title>The genome of the amoeba symbiont 'Candidatus Amoebophilus asiaticus' reveals common mechanisms for host cell interaction among amoeba-associated bacteria.</title>
        <authorList>
            <person name="Schmitz-Esser S."/>
            <person name="Tischler P."/>
            <person name="Arnold R."/>
            <person name="Montanaro J."/>
            <person name="Wagner M."/>
            <person name="Rattei T."/>
            <person name="Horn M."/>
        </authorList>
    </citation>
    <scope>NUCLEOTIDE SEQUENCE [LARGE SCALE GENOMIC DNA]</scope>
    <source>
        <strain>5a2</strain>
    </source>
</reference>
<proteinExistence type="inferred from homology"/>
<comment type="function">
    <text evidence="1">This protein binds to the 23S rRNA, and is important in its secondary structure. It is located near the subunit interface in the base of the L7/L12 stalk, and near the tRNA binding site of the peptidyltransferase center.</text>
</comment>
<comment type="subunit">
    <text evidence="1">Part of the 50S ribosomal subunit.</text>
</comment>
<comment type="similarity">
    <text evidence="1">Belongs to the universal ribosomal protein uL6 family.</text>
</comment>
<accession>B3EUK8</accession>
<feature type="chain" id="PRO_1000143941" description="Large ribosomal subunit protein uL6">
    <location>
        <begin position="1"/>
        <end position="184"/>
    </location>
</feature>
<organism>
    <name type="scientific">Amoebophilus asiaticus (strain 5a2)</name>
    <dbReference type="NCBI Taxonomy" id="452471"/>
    <lineage>
        <taxon>Bacteria</taxon>
        <taxon>Pseudomonadati</taxon>
        <taxon>Bacteroidota</taxon>
        <taxon>Cytophagia</taxon>
        <taxon>Cytophagales</taxon>
        <taxon>Amoebophilaceae</taxon>
        <taxon>Candidatus Amoebophilus</taxon>
    </lineage>
</organism>
<sequence>MSRIGKLPIKLPQGVTLRGPEEDIVYVKGPKGELSQYIDPAISVTIENDTVTLHRRTNQKRHKALHGLYRVLINNMIIGVSTGFTKSLELVGVGYKASVQGNALDLDLGYSHKIYFVIPPEIKVQAETTKGKNPLVHLEGIDKQLLGQVAAKIKTLRKVEPYKGKGIRYLGEQIRRKAGKTASK</sequence>